<gene>
    <name evidence="1" type="primary">engB</name>
    <name type="ordered locus">AHA_0268</name>
</gene>
<comment type="function">
    <text evidence="1">Necessary for normal cell division and for the maintenance of normal septation.</text>
</comment>
<comment type="cofactor">
    <cofactor evidence="1">
        <name>Mg(2+)</name>
        <dbReference type="ChEBI" id="CHEBI:18420"/>
    </cofactor>
</comment>
<comment type="similarity">
    <text evidence="1">Belongs to the TRAFAC class TrmE-Era-EngA-EngB-Septin-like GTPase superfamily. EngB GTPase family.</text>
</comment>
<name>ENGB_AERHH</name>
<protein>
    <recommendedName>
        <fullName evidence="1">Probable GTP-binding protein EngB</fullName>
    </recommendedName>
</protein>
<organism>
    <name type="scientific">Aeromonas hydrophila subsp. hydrophila (strain ATCC 7966 / DSM 30187 / BCRC 13018 / CCUG 14551 / JCM 1027 / KCTC 2358 / NCIMB 9240 / NCTC 8049)</name>
    <dbReference type="NCBI Taxonomy" id="380703"/>
    <lineage>
        <taxon>Bacteria</taxon>
        <taxon>Pseudomonadati</taxon>
        <taxon>Pseudomonadota</taxon>
        <taxon>Gammaproteobacteria</taxon>
        <taxon>Aeromonadales</taxon>
        <taxon>Aeromonadaceae</taxon>
        <taxon>Aeromonas</taxon>
    </lineage>
</organism>
<keyword id="KW-0131">Cell cycle</keyword>
<keyword id="KW-0132">Cell division</keyword>
<keyword id="KW-0342">GTP-binding</keyword>
<keyword id="KW-0460">Magnesium</keyword>
<keyword id="KW-0479">Metal-binding</keyword>
<keyword id="KW-0547">Nucleotide-binding</keyword>
<keyword id="KW-1185">Reference proteome</keyword>
<keyword id="KW-0717">Septation</keyword>
<reference key="1">
    <citation type="journal article" date="2006" name="J. Bacteriol.">
        <title>Genome sequence of Aeromonas hydrophila ATCC 7966T: jack of all trades.</title>
        <authorList>
            <person name="Seshadri R."/>
            <person name="Joseph S.W."/>
            <person name="Chopra A.K."/>
            <person name="Sha J."/>
            <person name="Shaw J."/>
            <person name="Graf J."/>
            <person name="Haft D.H."/>
            <person name="Wu M."/>
            <person name="Ren Q."/>
            <person name="Rosovitz M.J."/>
            <person name="Madupu R."/>
            <person name="Tallon L."/>
            <person name="Kim M."/>
            <person name="Jin S."/>
            <person name="Vuong H."/>
            <person name="Stine O.C."/>
            <person name="Ali A."/>
            <person name="Horneman A.J."/>
            <person name="Heidelberg J.F."/>
        </authorList>
    </citation>
    <scope>NUCLEOTIDE SEQUENCE [LARGE SCALE GENOMIC DNA]</scope>
    <source>
        <strain>ATCC 7966 / DSM 30187 / BCRC 13018 / CCUG 14551 / JCM 1027 / KCTC 2358 / NCIMB 9240 / NCTC 8049</strain>
    </source>
</reference>
<proteinExistence type="inferred from homology"/>
<feature type="chain" id="PRO_1000005794" description="Probable GTP-binding protein EngB">
    <location>
        <begin position="1"/>
        <end position="216"/>
    </location>
</feature>
<feature type="domain" description="EngB-type G" evidence="1">
    <location>
        <begin position="27"/>
        <end position="201"/>
    </location>
</feature>
<feature type="binding site" evidence="1">
    <location>
        <begin position="35"/>
        <end position="42"/>
    </location>
    <ligand>
        <name>GTP</name>
        <dbReference type="ChEBI" id="CHEBI:37565"/>
    </ligand>
</feature>
<feature type="binding site" evidence="1">
    <location>
        <position position="42"/>
    </location>
    <ligand>
        <name>Mg(2+)</name>
        <dbReference type="ChEBI" id="CHEBI:18420"/>
    </ligand>
</feature>
<feature type="binding site" evidence="1">
    <location>
        <begin position="62"/>
        <end position="66"/>
    </location>
    <ligand>
        <name>GTP</name>
        <dbReference type="ChEBI" id="CHEBI:37565"/>
    </ligand>
</feature>
<feature type="binding site" evidence="1">
    <location>
        <position position="64"/>
    </location>
    <ligand>
        <name>Mg(2+)</name>
        <dbReference type="ChEBI" id="CHEBI:18420"/>
    </ligand>
</feature>
<feature type="binding site" evidence="1">
    <location>
        <begin position="80"/>
        <end position="83"/>
    </location>
    <ligand>
        <name>GTP</name>
        <dbReference type="ChEBI" id="CHEBI:37565"/>
    </ligand>
</feature>
<feature type="binding site" evidence="1">
    <location>
        <begin position="147"/>
        <end position="150"/>
    </location>
    <ligand>
        <name>GTP</name>
        <dbReference type="ChEBI" id="CHEBI:37565"/>
    </ligand>
</feature>
<feature type="binding site" evidence="1">
    <location>
        <begin position="180"/>
        <end position="182"/>
    </location>
    <ligand>
        <name>GTP</name>
        <dbReference type="ChEBI" id="CHEBI:37565"/>
    </ligand>
</feature>
<dbReference type="EMBL" id="CP000462">
    <property type="protein sequence ID" value="ABK39156.1"/>
    <property type="molecule type" value="Genomic_DNA"/>
</dbReference>
<dbReference type="RefSeq" id="YP_854796.1">
    <property type="nucleotide sequence ID" value="NC_008570.1"/>
</dbReference>
<dbReference type="SMR" id="A0KEY0"/>
<dbReference type="STRING" id="380703.AHA_0268"/>
<dbReference type="EnsemblBacteria" id="ABK39156">
    <property type="protein sequence ID" value="ABK39156"/>
    <property type="gene ID" value="AHA_0268"/>
</dbReference>
<dbReference type="GeneID" id="4490199"/>
<dbReference type="KEGG" id="aha:AHA_0268"/>
<dbReference type="PATRIC" id="fig|380703.7.peg.255"/>
<dbReference type="eggNOG" id="COG0218">
    <property type="taxonomic scope" value="Bacteria"/>
</dbReference>
<dbReference type="HOGENOM" id="CLU_033732_1_2_6"/>
<dbReference type="OrthoDB" id="9804921at2"/>
<dbReference type="Proteomes" id="UP000000756">
    <property type="component" value="Chromosome"/>
</dbReference>
<dbReference type="GO" id="GO:0005829">
    <property type="term" value="C:cytosol"/>
    <property type="evidence" value="ECO:0007669"/>
    <property type="project" value="TreeGrafter"/>
</dbReference>
<dbReference type="GO" id="GO:0005525">
    <property type="term" value="F:GTP binding"/>
    <property type="evidence" value="ECO:0007669"/>
    <property type="project" value="UniProtKB-UniRule"/>
</dbReference>
<dbReference type="GO" id="GO:0046872">
    <property type="term" value="F:metal ion binding"/>
    <property type="evidence" value="ECO:0007669"/>
    <property type="project" value="UniProtKB-KW"/>
</dbReference>
<dbReference type="GO" id="GO:0000917">
    <property type="term" value="P:division septum assembly"/>
    <property type="evidence" value="ECO:0007669"/>
    <property type="project" value="UniProtKB-KW"/>
</dbReference>
<dbReference type="CDD" id="cd01876">
    <property type="entry name" value="YihA_EngB"/>
    <property type="match status" value="1"/>
</dbReference>
<dbReference type="FunFam" id="3.40.50.300:FF:000098">
    <property type="entry name" value="Probable GTP-binding protein EngB"/>
    <property type="match status" value="1"/>
</dbReference>
<dbReference type="Gene3D" id="3.40.50.300">
    <property type="entry name" value="P-loop containing nucleotide triphosphate hydrolases"/>
    <property type="match status" value="1"/>
</dbReference>
<dbReference type="HAMAP" id="MF_00321">
    <property type="entry name" value="GTPase_EngB"/>
    <property type="match status" value="1"/>
</dbReference>
<dbReference type="InterPro" id="IPR030393">
    <property type="entry name" value="G_ENGB_dom"/>
</dbReference>
<dbReference type="InterPro" id="IPR006073">
    <property type="entry name" value="GTP-bd"/>
</dbReference>
<dbReference type="InterPro" id="IPR019987">
    <property type="entry name" value="GTP-bd_ribosome_bio_YsxC"/>
</dbReference>
<dbReference type="InterPro" id="IPR027417">
    <property type="entry name" value="P-loop_NTPase"/>
</dbReference>
<dbReference type="NCBIfam" id="TIGR03598">
    <property type="entry name" value="GTPase_YsxC"/>
    <property type="match status" value="1"/>
</dbReference>
<dbReference type="PANTHER" id="PTHR11649:SF13">
    <property type="entry name" value="ENGB-TYPE G DOMAIN-CONTAINING PROTEIN"/>
    <property type="match status" value="1"/>
</dbReference>
<dbReference type="PANTHER" id="PTHR11649">
    <property type="entry name" value="MSS1/TRME-RELATED GTP-BINDING PROTEIN"/>
    <property type="match status" value="1"/>
</dbReference>
<dbReference type="Pfam" id="PF01926">
    <property type="entry name" value="MMR_HSR1"/>
    <property type="match status" value="1"/>
</dbReference>
<dbReference type="SUPFAM" id="SSF52540">
    <property type="entry name" value="P-loop containing nucleoside triphosphate hydrolases"/>
    <property type="match status" value="1"/>
</dbReference>
<dbReference type="PROSITE" id="PS51706">
    <property type="entry name" value="G_ENGB"/>
    <property type="match status" value="1"/>
</dbReference>
<accession>A0KEY0</accession>
<evidence type="ECO:0000255" key="1">
    <source>
        <dbReference type="HAMAP-Rule" id="MF_00321"/>
    </source>
</evidence>
<sequence>MDTQTLNFNKVHFVTSAPDIRHLPNDGGVEIAFAGRSNAGKSSALNTLTKHKNLARTSKTPGRTQLINLFELEPGKRLVDLPGYGYAQVPLEMKLKWQKSLAEYLQRRESLKGLVILMDIRHPLKDTDMNMLEWSSHRKLPVMLLLTKADKLSPGPRNNQVIKVRQAVAELGPQIQVEAFSSLTQIGVEKLAQTLTGWYLAGADDMTDGEQAPLEE</sequence>